<sequence>MTSPAKSSTAASSSSQRSLSAWSPLGGERFYAAARWVLIILLGVVTQFLTNGGLWPVTDEIGPLEGIFWLYVGFALVFTVLAFLQFAAGLVSISYLFDIAFISLMTFFGGERIVIFFPLYLVPLTYAAIRQSRSVSLLSGLLAAVAYMAAFIAWRRLIAPEALMTLLDYVALALRGTTLAIVPWVTGNLAERQSEFNRERVTQAQRDAEQALSEARAYRDQMRSLYRVALTLGSTANYRQVLDTLLQESQKIVPYRAGIVLLSSGQPNELYVAFGSNLAPGDLNRSLKMDTGLAAALRANTAQVITSFTQFPSLQQLGSLRTCKAAALLPLQAGMRVYGLFVVATDQTLTTDQVEMLMALANYAIVALHNAQLIYDLKEEREKLLSHEEEVRHQLARDLHDGPAQAMAVITMKAEFIKRLLERDPAQALAELDELSSIAKRTNYEVRTMLFELRPLMLETQGLKVTLEQYLDRLRAKAGNTAIVLEGTDIDKVRLGSKVEGALFNMIQESVTNAIKHAKANHIWVRLRRLNDQMLEVVIQDDGVGFDKAAVLKSYERRGSFGLLNIDERARLVGGRAEIDSTPGKGTQITIFVPIES</sequence>
<gene>
    <name type="ordered locus">Caur_0899</name>
</gene>
<comment type="subcellular location">
    <subcellularLocation>
        <location evidence="3">Cell membrane</location>
        <topology evidence="3">Multi-pass membrane protein</topology>
    </subcellularLocation>
</comment>
<proteinExistence type="predicted"/>
<accession>Q45827</accession>
<accession>A9WH37</accession>
<organism>
    <name type="scientific">Chloroflexus aurantiacus (strain ATCC 29366 / DSM 635 / J-10-fl)</name>
    <dbReference type="NCBI Taxonomy" id="324602"/>
    <lineage>
        <taxon>Bacteria</taxon>
        <taxon>Bacillati</taxon>
        <taxon>Chloroflexota</taxon>
        <taxon>Chloroflexia</taxon>
        <taxon>Chloroflexales</taxon>
        <taxon>Chloroflexineae</taxon>
        <taxon>Chloroflexaceae</taxon>
        <taxon>Chloroflexus</taxon>
    </lineage>
</organism>
<protein>
    <recommendedName>
        <fullName>Uncharacterized sensor-like histidine kinase Caur_0899</fullName>
        <ecNumber>2.7.13.-</ecNumber>
    </recommendedName>
</protein>
<keyword id="KW-1003">Cell membrane</keyword>
<keyword id="KW-0418">Kinase</keyword>
<keyword id="KW-0472">Membrane</keyword>
<keyword id="KW-1185">Reference proteome</keyword>
<keyword id="KW-0808">Transferase</keyword>
<keyword id="KW-0812">Transmembrane</keyword>
<keyword id="KW-1133">Transmembrane helix</keyword>
<keyword id="KW-0902">Two-component regulatory system</keyword>
<dbReference type="EC" id="2.7.13.-"/>
<dbReference type="EMBL" id="CP000909">
    <property type="protein sequence ID" value="ABY34132.1"/>
    <property type="molecule type" value="Genomic_DNA"/>
</dbReference>
<dbReference type="EMBL" id="X89038">
    <property type="protein sequence ID" value="CAA61437.1"/>
    <property type="molecule type" value="Genomic_DNA"/>
</dbReference>
<dbReference type="RefSeq" id="WP_012256788.1">
    <property type="nucleotide sequence ID" value="NC_010175.1"/>
</dbReference>
<dbReference type="RefSeq" id="YP_001634521.1">
    <property type="nucleotide sequence ID" value="NC_010175.1"/>
</dbReference>
<dbReference type="SMR" id="Q45827"/>
<dbReference type="STRING" id="324602.Caur_0899"/>
<dbReference type="EnsemblBacteria" id="ABY34132">
    <property type="protein sequence ID" value="ABY34132"/>
    <property type="gene ID" value="Caur_0899"/>
</dbReference>
<dbReference type="KEGG" id="cau:Caur_0899"/>
<dbReference type="PATRIC" id="fig|324602.8.peg.1030"/>
<dbReference type="eggNOG" id="COG4585">
    <property type="taxonomic scope" value="Bacteria"/>
</dbReference>
<dbReference type="HOGENOM" id="CLU_466746_0_0_0"/>
<dbReference type="InParanoid" id="Q45827"/>
<dbReference type="Proteomes" id="UP000002008">
    <property type="component" value="Chromosome"/>
</dbReference>
<dbReference type="GO" id="GO:0005886">
    <property type="term" value="C:plasma membrane"/>
    <property type="evidence" value="ECO:0000318"/>
    <property type="project" value="GO_Central"/>
</dbReference>
<dbReference type="GO" id="GO:0000155">
    <property type="term" value="F:phosphorelay sensor kinase activity"/>
    <property type="evidence" value="ECO:0007669"/>
    <property type="project" value="InterPro"/>
</dbReference>
<dbReference type="GO" id="GO:0046983">
    <property type="term" value="F:protein dimerization activity"/>
    <property type="evidence" value="ECO:0007669"/>
    <property type="project" value="InterPro"/>
</dbReference>
<dbReference type="GO" id="GO:0004672">
    <property type="term" value="F:protein kinase activity"/>
    <property type="evidence" value="ECO:0000318"/>
    <property type="project" value="GO_Central"/>
</dbReference>
<dbReference type="CDD" id="cd16917">
    <property type="entry name" value="HATPase_UhpB-NarQ-NarX-like"/>
    <property type="match status" value="1"/>
</dbReference>
<dbReference type="Gene3D" id="1.20.5.1930">
    <property type="match status" value="1"/>
</dbReference>
<dbReference type="Gene3D" id="3.30.450.40">
    <property type="match status" value="1"/>
</dbReference>
<dbReference type="Gene3D" id="3.30.565.10">
    <property type="entry name" value="Histidine kinase-like ATPase, C-terminal domain"/>
    <property type="match status" value="1"/>
</dbReference>
<dbReference type="InterPro" id="IPR003018">
    <property type="entry name" value="GAF"/>
</dbReference>
<dbReference type="InterPro" id="IPR029016">
    <property type="entry name" value="GAF-like_dom_sf"/>
</dbReference>
<dbReference type="InterPro" id="IPR036890">
    <property type="entry name" value="HATPase_C_sf"/>
</dbReference>
<dbReference type="InterPro" id="IPR005467">
    <property type="entry name" value="His_kinase_dom"/>
</dbReference>
<dbReference type="InterPro" id="IPR050482">
    <property type="entry name" value="Sensor_HK_TwoCompSys"/>
</dbReference>
<dbReference type="InterPro" id="IPR011712">
    <property type="entry name" value="Sig_transdc_His_kin_sub3_dim/P"/>
</dbReference>
<dbReference type="PANTHER" id="PTHR24421">
    <property type="entry name" value="NITRATE/NITRITE SENSOR PROTEIN NARX-RELATED"/>
    <property type="match status" value="1"/>
</dbReference>
<dbReference type="PANTHER" id="PTHR24421:SF37">
    <property type="entry name" value="SENSOR HISTIDINE KINASE NARS"/>
    <property type="match status" value="1"/>
</dbReference>
<dbReference type="Pfam" id="PF13492">
    <property type="entry name" value="GAF_3"/>
    <property type="match status" value="1"/>
</dbReference>
<dbReference type="Pfam" id="PF02518">
    <property type="entry name" value="HATPase_c"/>
    <property type="match status" value="1"/>
</dbReference>
<dbReference type="Pfam" id="PF07730">
    <property type="entry name" value="HisKA_3"/>
    <property type="match status" value="1"/>
</dbReference>
<dbReference type="SMART" id="SM00387">
    <property type="entry name" value="HATPase_c"/>
    <property type="match status" value="1"/>
</dbReference>
<dbReference type="SUPFAM" id="SSF55874">
    <property type="entry name" value="ATPase domain of HSP90 chaperone/DNA topoisomerase II/histidine kinase"/>
    <property type="match status" value="1"/>
</dbReference>
<dbReference type="SUPFAM" id="SSF55781">
    <property type="entry name" value="GAF domain-like"/>
    <property type="match status" value="1"/>
</dbReference>
<dbReference type="PROSITE" id="PS50109">
    <property type="entry name" value="HIS_KIN"/>
    <property type="match status" value="1"/>
</dbReference>
<reference key="1">
    <citation type="journal article" date="2011" name="BMC Genomics">
        <title>Complete genome sequence of the filamentous anoxygenic phototrophic bacterium Chloroflexus aurantiacus.</title>
        <authorList>
            <person name="Tang K.H."/>
            <person name="Barry K."/>
            <person name="Chertkov O."/>
            <person name="Dalin E."/>
            <person name="Han C.S."/>
            <person name="Hauser L.J."/>
            <person name="Honchak B.M."/>
            <person name="Karbach L.E."/>
            <person name="Land M.L."/>
            <person name="Lapidus A."/>
            <person name="Larimer F.W."/>
            <person name="Mikhailova N."/>
            <person name="Pitluck S."/>
            <person name="Pierson B.K."/>
            <person name="Blankenship R.E."/>
        </authorList>
    </citation>
    <scope>NUCLEOTIDE SEQUENCE [LARGE SCALE GENOMIC DNA]</scope>
    <source>
        <strain>ATCC 29366 / DSM 635 / J-10-fl</strain>
    </source>
</reference>
<reference key="2">
    <citation type="journal article" date="1996" name="Arch. Microbiol.">
        <title>Malate dehydrogenase from the green gliding bacterium Chloroflexus aurantiacus is phylogenetically related to lactic dehydrogenases.</title>
        <authorList>
            <person name="Synstad B."/>
            <person name="Emmerhoff O."/>
            <person name="Sirevag R."/>
        </authorList>
    </citation>
    <scope>NUCLEOTIDE SEQUENCE [GENOMIC DNA] OF 1-18</scope>
</reference>
<name>Y899_CHLAA</name>
<evidence type="ECO:0000255" key="1"/>
<evidence type="ECO:0000255" key="2">
    <source>
        <dbReference type="PROSITE-ProRule" id="PRU00107"/>
    </source>
</evidence>
<evidence type="ECO:0000305" key="3"/>
<feature type="chain" id="PRO_0000066304" description="Uncharacterized sensor-like histidine kinase Caur_0899">
    <location>
        <begin position="1"/>
        <end position="597"/>
    </location>
</feature>
<feature type="transmembrane region" description="Helical" evidence="1">
    <location>
        <begin position="37"/>
        <end position="57"/>
    </location>
</feature>
<feature type="transmembrane region" description="Helical" evidence="1">
    <location>
        <begin position="67"/>
        <end position="87"/>
    </location>
</feature>
<feature type="transmembrane region" description="Helical" evidence="1">
    <location>
        <begin position="109"/>
        <end position="129"/>
    </location>
</feature>
<feature type="transmembrane region" description="Helical" evidence="1">
    <location>
        <begin position="134"/>
        <end position="154"/>
    </location>
</feature>
<feature type="transmembrane region" description="Helical" evidence="1">
    <location>
        <begin position="162"/>
        <end position="182"/>
    </location>
</feature>
<feature type="domain" description="Histidine kinase" evidence="2">
    <location>
        <begin position="393"/>
        <end position="597"/>
    </location>
</feature>
<feature type="sequence conflict" description="In Ref. 2; CAA61437." evidence="3" ref="2">
    <original>S</original>
    <variation>L</variation>
    <location>
        <position position="13"/>
    </location>
</feature>